<reference key="1">
    <citation type="journal article" date="2003" name="Nature">
        <title>Unique physiological and pathogenic features of Leptospira interrogans revealed by whole-genome sequencing.</title>
        <authorList>
            <person name="Ren S.-X."/>
            <person name="Fu G."/>
            <person name="Jiang X.-G."/>
            <person name="Zeng R."/>
            <person name="Miao Y.-G."/>
            <person name="Xu H."/>
            <person name="Zhang Y.-X."/>
            <person name="Xiong H."/>
            <person name="Lu G."/>
            <person name="Lu L.-F."/>
            <person name="Jiang H.-Q."/>
            <person name="Jia J."/>
            <person name="Tu Y.-F."/>
            <person name="Jiang J.-X."/>
            <person name="Gu W.-Y."/>
            <person name="Zhang Y.-Q."/>
            <person name="Cai Z."/>
            <person name="Sheng H.-H."/>
            <person name="Yin H.-F."/>
            <person name="Zhang Y."/>
            <person name="Zhu G.-F."/>
            <person name="Wan M."/>
            <person name="Huang H.-L."/>
            <person name="Qian Z."/>
            <person name="Wang S.-Y."/>
            <person name="Ma W."/>
            <person name="Yao Z.-J."/>
            <person name="Shen Y."/>
            <person name="Qiang B.-Q."/>
            <person name="Xia Q.-C."/>
            <person name="Guo X.-K."/>
            <person name="Danchin A."/>
            <person name="Saint Girons I."/>
            <person name="Somerville R.L."/>
            <person name="Wen Y.-M."/>
            <person name="Shi M.-H."/>
            <person name="Chen Z."/>
            <person name="Xu J.-G."/>
            <person name="Zhao G.-P."/>
        </authorList>
    </citation>
    <scope>NUCLEOTIDE SEQUENCE [LARGE SCALE GENOMIC DNA]</scope>
    <source>
        <strain>56601</strain>
    </source>
</reference>
<organism>
    <name type="scientific">Leptospira interrogans serogroup Icterohaemorrhagiae serovar Lai (strain 56601)</name>
    <dbReference type="NCBI Taxonomy" id="189518"/>
    <lineage>
        <taxon>Bacteria</taxon>
        <taxon>Pseudomonadati</taxon>
        <taxon>Spirochaetota</taxon>
        <taxon>Spirochaetia</taxon>
        <taxon>Leptospirales</taxon>
        <taxon>Leptospiraceae</taxon>
        <taxon>Leptospira</taxon>
    </lineage>
</organism>
<comment type="function">
    <text evidence="1">Catalyzes the conversion of acetate into acetyl-CoA (AcCoA), an essential intermediate at the junction of anabolic and catabolic pathways. AcsA undergoes a two-step reaction. In the first half reaction, AcsA combines acetate with ATP to form acetyl-adenylate (AcAMP) intermediate. In the second half reaction, it can then transfer the acetyl group from AcAMP to the sulfhydryl group of CoA, forming the product AcCoA.</text>
</comment>
<comment type="catalytic activity">
    <reaction evidence="1">
        <text>acetate + ATP + CoA = acetyl-CoA + AMP + diphosphate</text>
        <dbReference type="Rhea" id="RHEA:23176"/>
        <dbReference type="ChEBI" id="CHEBI:30089"/>
        <dbReference type="ChEBI" id="CHEBI:30616"/>
        <dbReference type="ChEBI" id="CHEBI:33019"/>
        <dbReference type="ChEBI" id="CHEBI:57287"/>
        <dbReference type="ChEBI" id="CHEBI:57288"/>
        <dbReference type="ChEBI" id="CHEBI:456215"/>
        <dbReference type="EC" id="6.2.1.1"/>
    </reaction>
</comment>
<comment type="cofactor">
    <cofactor evidence="1">
        <name>Mg(2+)</name>
        <dbReference type="ChEBI" id="CHEBI:18420"/>
    </cofactor>
</comment>
<comment type="PTM">
    <text evidence="1">Acetylated. Deacetylation by the SIR2-homolog deacetylase activates the enzyme.</text>
</comment>
<comment type="similarity">
    <text evidence="1">Belongs to the ATP-dependent AMP-binding enzyme family.</text>
</comment>
<keyword id="KW-0007">Acetylation</keyword>
<keyword id="KW-0067">ATP-binding</keyword>
<keyword id="KW-0436">Ligase</keyword>
<keyword id="KW-0460">Magnesium</keyword>
<keyword id="KW-0479">Metal-binding</keyword>
<keyword id="KW-0547">Nucleotide-binding</keyword>
<keyword id="KW-1185">Reference proteome</keyword>
<dbReference type="EC" id="6.2.1.1" evidence="1"/>
<dbReference type="EMBL" id="AE010300">
    <property type="protein sequence ID" value="AAN51452.1"/>
    <property type="molecule type" value="Genomic_DNA"/>
</dbReference>
<dbReference type="RefSeq" id="NP_714434.1">
    <property type="nucleotide sequence ID" value="NC_004342.2"/>
</dbReference>
<dbReference type="SMR" id="Q8EYG2"/>
<dbReference type="FunCoup" id="Q8EYG2">
    <property type="interactions" value="438"/>
</dbReference>
<dbReference type="STRING" id="189518.LA_4254"/>
<dbReference type="PaxDb" id="189518-LA_4254"/>
<dbReference type="EnsemblBacteria" id="AAN51452">
    <property type="protein sequence ID" value="AAN51452"/>
    <property type="gene ID" value="LA_4254"/>
</dbReference>
<dbReference type="KEGG" id="lil:LA_4254"/>
<dbReference type="PATRIC" id="fig|189518.3.peg.4226"/>
<dbReference type="HOGENOM" id="CLU_000022_3_6_12"/>
<dbReference type="InParanoid" id="Q8EYG2"/>
<dbReference type="OrthoDB" id="9778383at2"/>
<dbReference type="Proteomes" id="UP000001408">
    <property type="component" value="Chromosome I"/>
</dbReference>
<dbReference type="GO" id="GO:0005829">
    <property type="term" value="C:cytosol"/>
    <property type="evidence" value="ECO:0000318"/>
    <property type="project" value="GO_Central"/>
</dbReference>
<dbReference type="GO" id="GO:0003987">
    <property type="term" value="F:acetate-CoA ligase activity"/>
    <property type="evidence" value="ECO:0000318"/>
    <property type="project" value="GO_Central"/>
</dbReference>
<dbReference type="GO" id="GO:0016208">
    <property type="term" value="F:AMP binding"/>
    <property type="evidence" value="ECO:0007669"/>
    <property type="project" value="InterPro"/>
</dbReference>
<dbReference type="GO" id="GO:0005524">
    <property type="term" value="F:ATP binding"/>
    <property type="evidence" value="ECO:0007669"/>
    <property type="project" value="UniProtKB-KW"/>
</dbReference>
<dbReference type="GO" id="GO:0046872">
    <property type="term" value="F:metal ion binding"/>
    <property type="evidence" value="ECO:0007669"/>
    <property type="project" value="UniProtKB-KW"/>
</dbReference>
<dbReference type="GO" id="GO:0006085">
    <property type="term" value="P:acetyl-CoA biosynthetic process"/>
    <property type="evidence" value="ECO:0000318"/>
    <property type="project" value="GO_Central"/>
</dbReference>
<dbReference type="GO" id="GO:0019427">
    <property type="term" value="P:acetyl-CoA biosynthetic process from acetate"/>
    <property type="evidence" value="ECO:0007669"/>
    <property type="project" value="InterPro"/>
</dbReference>
<dbReference type="CDD" id="cd05966">
    <property type="entry name" value="ACS"/>
    <property type="match status" value="1"/>
</dbReference>
<dbReference type="FunFam" id="3.30.300.30:FF:000004">
    <property type="entry name" value="Acetyl-coenzyme A synthetase"/>
    <property type="match status" value="1"/>
</dbReference>
<dbReference type="FunFam" id="3.40.50.12780:FF:000001">
    <property type="entry name" value="Acetyl-coenzyme A synthetase"/>
    <property type="match status" value="1"/>
</dbReference>
<dbReference type="Gene3D" id="3.30.300.30">
    <property type="match status" value="1"/>
</dbReference>
<dbReference type="Gene3D" id="3.40.50.12780">
    <property type="entry name" value="N-terminal domain of ligase-like"/>
    <property type="match status" value="1"/>
</dbReference>
<dbReference type="HAMAP" id="MF_01123">
    <property type="entry name" value="Ac_CoA_synth"/>
    <property type="match status" value="1"/>
</dbReference>
<dbReference type="InterPro" id="IPR011904">
    <property type="entry name" value="Ac_CoA_lig"/>
</dbReference>
<dbReference type="InterPro" id="IPR032387">
    <property type="entry name" value="ACAS_N"/>
</dbReference>
<dbReference type="InterPro" id="IPR025110">
    <property type="entry name" value="AMP-bd_C"/>
</dbReference>
<dbReference type="InterPro" id="IPR045851">
    <property type="entry name" value="AMP-bd_C_sf"/>
</dbReference>
<dbReference type="InterPro" id="IPR020845">
    <property type="entry name" value="AMP-binding_CS"/>
</dbReference>
<dbReference type="InterPro" id="IPR000873">
    <property type="entry name" value="AMP-dep_synth/lig_dom"/>
</dbReference>
<dbReference type="InterPro" id="IPR042099">
    <property type="entry name" value="ANL_N_sf"/>
</dbReference>
<dbReference type="NCBIfam" id="TIGR02188">
    <property type="entry name" value="Ac_CoA_lig_AcsA"/>
    <property type="match status" value="1"/>
</dbReference>
<dbReference type="NCBIfam" id="NF001208">
    <property type="entry name" value="PRK00174.1"/>
    <property type="match status" value="1"/>
</dbReference>
<dbReference type="PANTHER" id="PTHR24095">
    <property type="entry name" value="ACETYL-COENZYME A SYNTHETASE"/>
    <property type="match status" value="1"/>
</dbReference>
<dbReference type="PANTHER" id="PTHR24095:SF14">
    <property type="entry name" value="ACETYL-COENZYME A SYNTHETASE 1"/>
    <property type="match status" value="1"/>
</dbReference>
<dbReference type="Pfam" id="PF16177">
    <property type="entry name" value="ACAS_N"/>
    <property type="match status" value="1"/>
</dbReference>
<dbReference type="Pfam" id="PF00501">
    <property type="entry name" value="AMP-binding"/>
    <property type="match status" value="1"/>
</dbReference>
<dbReference type="Pfam" id="PF13193">
    <property type="entry name" value="AMP-binding_C"/>
    <property type="match status" value="1"/>
</dbReference>
<dbReference type="SUPFAM" id="SSF56801">
    <property type="entry name" value="Acetyl-CoA synthetase-like"/>
    <property type="match status" value="1"/>
</dbReference>
<dbReference type="PROSITE" id="PS00455">
    <property type="entry name" value="AMP_BINDING"/>
    <property type="match status" value="1"/>
</dbReference>
<feature type="chain" id="PRO_0000208367" description="Acetyl-coenzyme A synthetase">
    <location>
        <begin position="1"/>
        <end position="661"/>
    </location>
</feature>
<feature type="binding site" evidence="1">
    <location>
        <begin position="197"/>
        <end position="200"/>
    </location>
    <ligand>
        <name>CoA</name>
        <dbReference type="ChEBI" id="CHEBI:57287"/>
    </ligand>
</feature>
<feature type="binding site" evidence="1">
    <location>
        <position position="320"/>
    </location>
    <ligand>
        <name>CoA</name>
        <dbReference type="ChEBI" id="CHEBI:57287"/>
    </ligand>
</feature>
<feature type="binding site" evidence="1">
    <location>
        <begin position="396"/>
        <end position="398"/>
    </location>
    <ligand>
        <name>ATP</name>
        <dbReference type="ChEBI" id="CHEBI:30616"/>
    </ligand>
</feature>
<feature type="binding site" evidence="1">
    <location>
        <begin position="420"/>
        <end position="425"/>
    </location>
    <ligand>
        <name>ATP</name>
        <dbReference type="ChEBI" id="CHEBI:30616"/>
    </ligand>
</feature>
<feature type="binding site" evidence="1">
    <location>
        <position position="511"/>
    </location>
    <ligand>
        <name>ATP</name>
        <dbReference type="ChEBI" id="CHEBI:30616"/>
    </ligand>
</feature>
<feature type="binding site" evidence="1">
    <location>
        <position position="526"/>
    </location>
    <ligand>
        <name>ATP</name>
        <dbReference type="ChEBI" id="CHEBI:30616"/>
    </ligand>
</feature>
<feature type="binding site" evidence="1">
    <location>
        <position position="534"/>
    </location>
    <ligand>
        <name>CoA</name>
        <dbReference type="ChEBI" id="CHEBI:57287"/>
    </ligand>
</feature>
<feature type="binding site" evidence="1">
    <location>
        <position position="537"/>
    </location>
    <ligand>
        <name>ATP</name>
        <dbReference type="ChEBI" id="CHEBI:30616"/>
    </ligand>
</feature>
<feature type="binding site" evidence="1">
    <location>
        <position position="548"/>
    </location>
    <ligand>
        <name>Mg(2+)</name>
        <dbReference type="ChEBI" id="CHEBI:18420"/>
    </ligand>
</feature>
<feature type="binding site" evidence="1">
    <location>
        <position position="553"/>
    </location>
    <ligand>
        <name>Mg(2+)</name>
        <dbReference type="ChEBI" id="CHEBI:18420"/>
    </ligand>
</feature>
<feature type="modified residue" description="N6-acetyllysine" evidence="1">
    <location>
        <position position="620"/>
    </location>
</feature>
<proteinExistence type="inferred from homology"/>
<sequence length="661" mass="74091">MPNSEEVMAKERVVSPSAEFKKNANISLKNYKSLYKESIENPNKFWAREANRLIWFKKWTKVLSHDFKNAKVEWFKGGKLNVSYNCLDRHISTPLKNKAALIWEGDNPTESRVLTYYDVYREVNRFANILKKFGVKKGDRVLVYLPMIPELAITILACTRIGAIHSVVFGGFSPEALQSRIDDCKPKLVVTADGGFRGGKPIELKKNVDLALEKSKEKVKTVIVVRRTGNESGLTWKDGQDYWYHFLMNDPELSAYCKPEEMDAEDPLFILYTSGSTGKPKGVLHTTGGYLLGANLTFHYVFDIKPEDTYWCTADIGWVTGHSYLVYGPLSNGASSVMFEGVPSYPDAGRFWDVIDKYGVNIFYTAPTAIRALMREGLNHIQKRDLSSLRLLGSVGEPINPEAWEWYFKNIGKGKCPIVDTWWQTETGSIMITALPGAIPQKPGSATLPFFGVQPVLVDNDGKEITDKGEVSGNLCIKGPWPSMMRGVYGDPKRFFETYFSQFKGYYFTGDGARRDKDGYFWITGRVDDVINVSGHRIGSAEVESALVENKSVAEAAVVGFPHDIKGQGIYAYVTVKEGVTTNDVLKKELISTVEKMIGKIARPDVIHWAPGLPKTRSGKIMRRILRKIVSGEFEGLGDTSTLADPSVVQKLIEDKKKFHS</sequence>
<gene>
    <name evidence="1" type="primary">acsA</name>
    <name type="ordered locus">LA_4254</name>
</gene>
<protein>
    <recommendedName>
        <fullName evidence="1">Acetyl-coenzyme A synthetase</fullName>
        <shortName evidence="1">AcCoA synthetase</shortName>
        <shortName evidence="1">Acs</shortName>
        <ecNumber evidence="1">6.2.1.1</ecNumber>
    </recommendedName>
    <alternativeName>
        <fullName evidence="1">Acetate--CoA ligase</fullName>
    </alternativeName>
    <alternativeName>
        <fullName evidence="1">Acyl-activating enzyme</fullName>
    </alternativeName>
</protein>
<accession>Q8EYG2</accession>
<evidence type="ECO:0000255" key="1">
    <source>
        <dbReference type="HAMAP-Rule" id="MF_01123"/>
    </source>
</evidence>
<name>ACSA_LEPIN</name>